<feature type="chain" id="PRO_0000364674" description="Fructose-1,6-bisphosphatase class 1">
    <location>
        <begin position="1"/>
        <end position="343"/>
    </location>
</feature>
<feature type="binding site" evidence="1">
    <location>
        <position position="90"/>
    </location>
    <ligand>
        <name>Mg(2+)</name>
        <dbReference type="ChEBI" id="CHEBI:18420"/>
        <label>1</label>
    </ligand>
</feature>
<feature type="binding site" evidence="1">
    <location>
        <position position="109"/>
    </location>
    <ligand>
        <name>Mg(2+)</name>
        <dbReference type="ChEBI" id="CHEBI:18420"/>
        <label>1</label>
    </ligand>
</feature>
<feature type="binding site" evidence="1">
    <location>
        <position position="109"/>
    </location>
    <ligand>
        <name>Mg(2+)</name>
        <dbReference type="ChEBI" id="CHEBI:18420"/>
        <label>2</label>
    </ligand>
</feature>
<feature type="binding site" evidence="1">
    <location>
        <position position="111"/>
    </location>
    <ligand>
        <name>Mg(2+)</name>
        <dbReference type="ChEBI" id="CHEBI:18420"/>
        <label>1</label>
    </ligand>
</feature>
<feature type="binding site" evidence="1">
    <location>
        <begin position="112"/>
        <end position="115"/>
    </location>
    <ligand>
        <name>substrate</name>
    </ligand>
</feature>
<feature type="binding site" evidence="1">
    <location>
        <position position="112"/>
    </location>
    <ligand>
        <name>Mg(2+)</name>
        <dbReference type="ChEBI" id="CHEBI:18420"/>
        <label>2</label>
    </ligand>
</feature>
<feature type="binding site" evidence="1">
    <location>
        <position position="199"/>
    </location>
    <ligand>
        <name>substrate</name>
    </ligand>
</feature>
<feature type="binding site" evidence="1">
    <location>
        <position position="271"/>
    </location>
    <ligand>
        <name>Mg(2+)</name>
        <dbReference type="ChEBI" id="CHEBI:18420"/>
        <label>2</label>
    </ligand>
</feature>
<reference key="1">
    <citation type="journal article" date="2004" name="Nat. Biotechnol.">
        <title>Complete genome sequence of the metabolically versatile photosynthetic bacterium Rhodopseudomonas palustris.</title>
        <authorList>
            <person name="Larimer F.W."/>
            <person name="Chain P."/>
            <person name="Hauser L."/>
            <person name="Lamerdin J.E."/>
            <person name="Malfatti S."/>
            <person name="Do L."/>
            <person name="Land M.L."/>
            <person name="Pelletier D.A."/>
            <person name="Beatty J.T."/>
            <person name="Lang A.S."/>
            <person name="Tabita F.R."/>
            <person name="Gibson J.L."/>
            <person name="Hanson T.E."/>
            <person name="Bobst C."/>
            <person name="Torres y Torres J.L."/>
            <person name="Peres C."/>
            <person name="Harrison F.H."/>
            <person name="Gibson J."/>
            <person name="Harwood C.S."/>
        </authorList>
    </citation>
    <scope>NUCLEOTIDE SEQUENCE [LARGE SCALE GENOMIC DNA]</scope>
    <source>
        <strain>ATCC BAA-98 / CGA009</strain>
    </source>
</reference>
<evidence type="ECO:0000255" key="1">
    <source>
        <dbReference type="HAMAP-Rule" id="MF_01855"/>
    </source>
</evidence>
<sequence length="343" mass="36633">MDQGQTLSVLLDSYAVDPQKKAVAAAVGAIAAGSIEISELIGQGALAGITGAAHGGSNADGDVQKDLDVKAEQIIVKSLKDVPYAALASEESDTLLDGDPNAPISIAYDPLDGSSNIDTNMTVGTIFSIIPNQPGVKPFTAAGSCQIAAGFVVYGPQTSLVLTLGDGVNIFTLDRKAKVYRLIRERVKVPADTAEYAVNASNHRHWEQPIRDFVDECIAGADGPRAKDFNMRWIGSLVAEVYRILTRGGVFLYPGDNRPGYGNGRLRLLYETHPMSFVMEQAGGAASTGRERVLDLTAKTIHQRSPLIMGSIDKVKRIELLHTDPSAASRSAPLFARRGLFRV</sequence>
<organism>
    <name type="scientific">Rhodopseudomonas palustris (strain ATCC BAA-98 / CGA009)</name>
    <dbReference type="NCBI Taxonomy" id="258594"/>
    <lineage>
        <taxon>Bacteria</taxon>
        <taxon>Pseudomonadati</taxon>
        <taxon>Pseudomonadota</taxon>
        <taxon>Alphaproteobacteria</taxon>
        <taxon>Hyphomicrobiales</taxon>
        <taxon>Nitrobacteraceae</taxon>
        <taxon>Rhodopseudomonas</taxon>
    </lineage>
</organism>
<name>F16PA_RHOPA</name>
<dbReference type="EC" id="3.1.3.11" evidence="1"/>
<dbReference type="EMBL" id="BX572607">
    <property type="protein sequence ID" value="CAE30085.1"/>
    <property type="molecule type" value="Genomic_DNA"/>
</dbReference>
<dbReference type="RefSeq" id="WP_011160177.1">
    <property type="nucleotide sequence ID" value="NZ_CP116810.1"/>
</dbReference>
<dbReference type="SMR" id="Q6N0W5"/>
<dbReference type="STRING" id="258594.RPA4645"/>
<dbReference type="GeneID" id="66895797"/>
<dbReference type="eggNOG" id="COG0158">
    <property type="taxonomic scope" value="Bacteria"/>
</dbReference>
<dbReference type="HOGENOM" id="CLU_039977_0_0_5"/>
<dbReference type="PhylomeDB" id="Q6N0W5"/>
<dbReference type="UniPathway" id="UPA00116"/>
<dbReference type="GO" id="GO:0005829">
    <property type="term" value="C:cytosol"/>
    <property type="evidence" value="ECO:0007669"/>
    <property type="project" value="TreeGrafter"/>
</dbReference>
<dbReference type="GO" id="GO:0042132">
    <property type="term" value="F:fructose 1,6-bisphosphate 1-phosphatase activity"/>
    <property type="evidence" value="ECO:0007669"/>
    <property type="project" value="UniProtKB-UniRule"/>
</dbReference>
<dbReference type="GO" id="GO:0000287">
    <property type="term" value="F:magnesium ion binding"/>
    <property type="evidence" value="ECO:0007669"/>
    <property type="project" value="UniProtKB-UniRule"/>
</dbReference>
<dbReference type="GO" id="GO:0030388">
    <property type="term" value="P:fructose 1,6-bisphosphate metabolic process"/>
    <property type="evidence" value="ECO:0007669"/>
    <property type="project" value="TreeGrafter"/>
</dbReference>
<dbReference type="GO" id="GO:0006002">
    <property type="term" value="P:fructose 6-phosphate metabolic process"/>
    <property type="evidence" value="ECO:0007669"/>
    <property type="project" value="TreeGrafter"/>
</dbReference>
<dbReference type="GO" id="GO:0006000">
    <property type="term" value="P:fructose metabolic process"/>
    <property type="evidence" value="ECO:0007669"/>
    <property type="project" value="TreeGrafter"/>
</dbReference>
<dbReference type="GO" id="GO:0006094">
    <property type="term" value="P:gluconeogenesis"/>
    <property type="evidence" value="ECO:0007669"/>
    <property type="project" value="UniProtKB-UniRule"/>
</dbReference>
<dbReference type="GO" id="GO:0019253">
    <property type="term" value="P:reductive pentose-phosphate cycle"/>
    <property type="evidence" value="ECO:0007669"/>
    <property type="project" value="UniProtKB-UniRule"/>
</dbReference>
<dbReference type="GO" id="GO:0005986">
    <property type="term" value="P:sucrose biosynthetic process"/>
    <property type="evidence" value="ECO:0007669"/>
    <property type="project" value="TreeGrafter"/>
</dbReference>
<dbReference type="CDD" id="cd00354">
    <property type="entry name" value="FBPase"/>
    <property type="match status" value="1"/>
</dbReference>
<dbReference type="FunFam" id="3.40.190.80:FF:000011">
    <property type="entry name" value="Fructose-1,6-bisphosphatase class 1"/>
    <property type="match status" value="1"/>
</dbReference>
<dbReference type="Gene3D" id="3.40.190.80">
    <property type="match status" value="1"/>
</dbReference>
<dbReference type="Gene3D" id="3.30.540.10">
    <property type="entry name" value="Fructose-1,6-Bisphosphatase, subunit A, domain 1"/>
    <property type="match status" value="1"/>
</dbReference>
<dbReference type="HAMAP" id="MF_01855">
    <property type="entry name" value="FBPase_class1"/>
    <property type="match status" value="1"/>
</dbReference>
<dbReference type="InterPro" id="IPR044015">
    <property type="entry name" value="FBPase_C_dom"/>
</dbReference>
<dbReference type="InterPro" id="IPR000146">
    <property type="entry name" value="FBPase_class-1"/>
</dbReference>
<dbReference type="InterPro" id="IPR033391">
    <property type="entry name" value="FBPase_N"/>
</dbReference>
<dbReference type="InterPro" id="IPR028343">
    <property type="entry name" value="FBPtase"/>
</dbReference>
<dbReference type="InterPro" id="IPR020548">
    <property type="entry name" value="Fructose_bisphosphatase_AS"/>
</dbReference>
<dbReference type="NCBIfam" id="NF006779">
    <property type="entry name" value="PRK09293.1-3"/>
    <property type="match status" value="1"/>
</dbReference>
<dbReference type="NCBIfam" id="NF006780">
    <property type="entry name" value="PRK09293.1-4"/>
    <property type="match status" value="1"/>
</dbReference>
<dbReference type="PANTHER" id="PTHR11556">
    <property type="entry name" value="FRUCTOSE-1,6-BISPHOSPHATASE-RELATED"/>
    <property type="match status" value="1"/>
</dbReference>
<dbReference type="PANTHER" id="PTHR11556:SF35">
    <property type="entry name" value="SEDOHEPTULOSE-1,7-BISPHOSPHATASE, CHLOROPLASTIC"/>
    <property type="match status" value="1"/>
</dbReference>
<dbReference type="Pfam" id="PF00316">
    <property type="entry name" value="FBPase"/>
    <property type="match status" value="1"/>
</dbReference>
<dbReference type="Pfam" id="PF18913">
    <property type="entry name" value="FBPase_C"/>
    <property type="match status" value="1"/>
</dbReference>
<dbReference type="PIRSF" id="PIRSF500210">
    <property type="entry name" value="FBPtase"/>
    <property type="match status" value="1"/>
</dbReference>
<dbReference type="PIRSF" id="PIRSF000904">
    <property type="entry name" value="FBPtase_SBPase"/>
    <property type="match status" value="1"/>
</dbReference>
<dbReference type="PRINTS" id="PR00115">
    <property type="entry name" value="F16BPHPHTASE"/>
</dbReference>
<dbReference type="SUPFAM" id="SSF56655">
    <property type="entry name" value="Carbohydrate phosphatase"/>
    <property type="match status" value="1"/>
</dbReference>
<dbReference type="PROSITE" id="PS00124">
    <property type="entry name" value="FBPASE"/>
    <property type="match status" value="1"/>
</dbReference>
<proteinExistence type="inferred from homology"/>
<accession>Q6N0W5</accession>
<gene>
    <name evidence="1" type="primary">fbp</name>
    <name type="ordered locus">RPA4645</name>
</gene>
<keyword id="KW-0113">Calvin cycle</keyword>
<keyword id="KW-0119">Carbohydrate metabolism</keyword>
<keyword id="KW-0963">Cytoplasm</keyword>
<keyword id="KW-0378">Hydrolase</keyword>
<keyword id="KW-0460">Magnesium</keyword>
<keyword id="KW-0479">Metal-binding</keyword>
<protein>
    <recommendedName>
        <fullName evidence="1">Fructose-1,6-bisphosphatase class 1</fullName>
        <shortName evidence="1">FBPase class 1</shortName>
        <ecNumber evidence="1">3.1.3.11</ecNumber>
    </recommendedName>
    <alternativeName>
        <fullName evidence="1">D-fructose-1,6-bisphosphate 1-phosphohydrolase class 1</fullName>
    </alternativeName>
</protein>
<comment type="catalytic activity">
    <reaction evidence="1">
        <text>beta-D-fructose 1,6-bisphosphate + H2O = beta-D-fructose 6-phosphate + phosphate</text>
        <dbReference type="Rhea" id="RHEA:11064"/>
        <dbReference type="ChEBI" id="CHEBI:15377"/>
        <dbReference type="ChEBI" id="CHEBI:32966"/>
        <dbReference type="ChEBI" id="CHEBI:43474"/>
        <dbReference type="ChEBI" id="CHEBI:57634"/>
        <dbReference type="EC" id="3.1.3.11"/>
    </reaction>
</comment>
<comment type="cofactor">
    <cofactor evidence="1">
        <name>Mg(2+)</name>
        <dbReference type="ChEBI" id="CHEBI:18420"/>
    </cofactor>
    <text evidence="1">Binds 2 magnesium ions per subunit.</text>
</comment>
<comment type="pathway">
    <text evidence="1">Carbohydrate biosynthesis; Calvin cycle.</text>
</comment>
<comment type="subunit">
    <text evidence="1">Homotetramer.</text>
</comment>
<comment type="subcellular location">
    <subcellularLocation>
        <location evidence="1">Cytoplasm</location>
    </subcellularLocation>
</comment>
<comment type="similarity">
    <text evidence="1">Belongs to the FBPase class 1 family.</text>
</comment>